<dbReference type="EC" id="4.2.1.17" evidence="1"/>
<dbReference type="EC" id="5.1.2.3" evidence="1"/>
<dbReference type="EC" id="1.1.1.35" evidence="1"/>
<dbReference type="EMBL" id="CP000447">
    <property type="protein sequence ID" value="ABI72516.1"/>
    <property type="molecule type" value="Genomic_DNA"/>
</dbReference>
<dbReference type="SMR" id="Q07ZP8"/>
<dbReference type="STRING" id="318167.Sfri_2676"/>
<dbReference type="KEGG" id="sfr:Sfri_2676"/>
<dbReference type="eggNOG" id="COG1024">
    <property type="taxonomic scope" value="Bacteria"/>
</dbReference>
<dbReference type="eggNOG" id="COG1250">
    <property type="taxonomic scope" value="Bacteria"/>
</dbReference>
<dbReference type="HOGENOM" id="CLU_009834_16_1_6"/>
<dbReference type="UniPathway" id="UPA00659"/>
<dbReference type="Proteomes" id="UP000000684">
    <property type="component" value="Chromosome"/>
</dbReference>
<dbReference type="GO" id="GO:0005737">
    <property type="term" value="C:cytoplasm"/>
    <property type="evidence" value="ECO:0007669"/>
    <property type="project" value="UniProtKB-SubCell"/>
</dbReference>
<dbReference type="GO" id="GO:0008692">
    <property type="term" value="F:3-hydroxybutyryl-CoA epimerase activity"/>
    <property type="evidence" value="ECO:0007669"/>
    <property type="project" value="UniProtKB-UniRule"/>
</dbReference>
<dbReference type="GO" id="GO:0004300">
    <property type="term" value="F:enoyl-CoA hydratase activity"/>
    <property type="evidence" value="ECO:0007669"/>
    <property type="project" value="UniProtKB-UniRule"/>
</dbReference>
<dbReference type="GO" id="GO:0016509">
    <property type="term" value="F:long-chain-3-hydroxyacyl-CoA dehydrogenase activity"/>
    <property type="evidence" value="ECO:0007669"/>
    <property type="project" value="TreeGrafter"/>
</dbReference>
<dbReference type="GO" id="GO:0070403">
    <property type="term" value="F:NAD+ binding"/>
    <property type="evidence" value="ECO:0007669"/>
    <property type="project" value="InterPro"/>
</dbReference>
<dbReference type="GO" id="GO:0006635">
    <property type="term" value="P:fatty acid beta-oxidation"/>
    <property type="evidence" value="ECO:0007669"/>
    <property type="project" value="UniProtKB-UniRule"/>
</dbReference>
<dbReference type="CDD" id="cd06558">
    <property type="entry name" value="crotonase-like"/>
    <property type="match status" value="1"/>
</dbReference>
<dbReference type="FunFam" id="3.90.226.10:FF:000011">
    <property type="entry name" value="Fatty acid oxidation complex subunit alpha"/>
    <property type="match status" value="1"/>
</dbReference>
<dbReference type="FunFam" id="3.40.50.720:FF:000009">
    <property type="entry name" value="Fatty oxidation complex, alpha subunit"/>
    <property type="match status" value="1"/>
</dbReference>
<dbReference type="Gene3D" id="1.10.1040.50">
    <property type="match status" value="1"/>
</dbReference>
<dbReference type="Gene3D" id="3.90.226.10">
    <property type="entry name" value="2-enoyl-CoA Hydratase, Chain A, domain 1"/>
    <property type="match status" value="1"/>
</dbReference>
<dbReference type="Gene3D" id="3.40.50.720">
    <property type="entry name" value="NAD(P)-binding Rossmann-like Domain"/>
    <property type="match status" value="1"/>
</dbReference>
<dbReference type="HAMAP" id="MF_01617">
    <property type="entry name" value="FadJ"/>
    <property type="match status" value="1"/>
</dbReference>
<dbReference type="InterPro" id="IPR006176">
    <property type="entry name" value="3-OHacyl-CoA_DH_NAD-bd"/>
</dbReference>
<dbReference type="InterPro" id="IPR006108">
    <property type="entry name" value="3HC_DH_C"/>
</dbReference>
<dbReference type="InterPro" id="IPR008927">
    <property type="entry name" value="6-PGluconate_DH-like_C_sf"/>
</dbReference>
<dbReference type="InterPro" id="IPR029045">
    <property type="entry name" value="ClpP/crotonase-like_dom_sf"/>
</dbReference>
<dbReference type="InterPro" id="IPR018376">
    <property type="entry name" value="Enoyl-CoA_hyd/isom_CS"/>
</dbReference>
<dbReference type="InterPro" id="IPR001753">
    <property type="entry name" value="Enoyl-CoA_hydra/iso"/>
</dbReference>
<dbReference type="InterPro" id="IPR050136">
    <property type="entry name" value="FA_oxidation_alpha_subunit"/>
</dbReference>
<dbReference type="InterPro" id="IPR012802">
    <property type="entry name" value="FadJ"/>
</dbReference>
<dbReference type="InterPro" id="IPR036291">
    <property type="entry name" value="NAD(P)-bd_dom_sf"/>
</dbReference>
<dbReference type="NCBIfam" id="TIGR02440">
    <property type="entry name" value="FadJ"/>
    <property type="match status" value="1"/>
</dbReference>
<dbReference type="NCBIfam" id="NF008363">
    <property type="entry name" value="PRK11154.1"/>
    <property type="match status" value="1"/>
</dbReference>
<dbReference type="PANTHER" id="PTHR43612">
    <property type="entry name" value="TRIFUNCTIONAL ENZYME SUBUNIT ALPHA"/>
    <property type="match status" value="1"/>
</dbReference>
<dbReference type="PANTHER" id="PTHR43612:SF3">
    <property type="entry name" value="TRIFUNCTIONAL ENZYME SUBUNIT ALPHA, MITOCHONDRIAL"/>
    <property type="match status" value="1"/>
</dbReference>
<dbReference type="Pfam" id="PF00725">
    <property type="entry name" value="3HCDH"/>
    <property type="match status" value="2"/>
</dbReference>
<dbReference type="Pfam" id="PF02737">
    <property type="entry name" value="3HCDH_N"/>
    <property type="match status" value="1"/>
</dbReference>
<dbReference type="Pfam" id="PF00378">
    <property type="entry name" value="ECH_1"/>
    <property type="match status" value="1"/>
</dbReference>
<dbReference type="SUPFAM" id="SSF48179">
    <property type="entry name" value="6-phosphogluconate dehydrogenase C-terminal domain-like"/>
    <property type="match status" value="2"/>
</dbReference>
<dbReference type="SUPFAM" id="SSF52096">
    <property type="entry name" value="ClpP/crotonase"/>
    <property type="match status" value="1"/>
</dbReference>
<dbReference type="SUPFAM" id="SSF51735">
    <property type="entry name" value="NAD(P)-binding Rossmann-fold domains"/>
    <property type="match status" value="1"/>
</dbReference>
<dbReference type="PROSITE" id="PS00166">
    <property type="entry name" value="ENOYL_COA_HYDRATASE"/>
    <property type="match status" value="1"/>
</dbReference>
<keyword id="KW-0963">Cytoplasm</keyword>
<keyword id="KW-0276">Fatty acid metabolism</keyword>
<keyword id="KW-0413">Isomerase</keyword>
<keyword id="KW-0442">Lipid degradation</keyword>
<keyword id="KW-0443">Lipid metabolism</keyword>
<keyword id="KW-0456">Lyase</keyword>
<keyword id="KW-0511">Multifunctional enzyme</keyword>
<keyword id="KW-0520">NAD</keyword>
<keyword id="KW-0560">Oxidoreductase</keyword>
<keyword id="KW-1185">Reference proteome</keyword>
<gene>
    <name evidence="1" type="primary">fadJ</name>
    <name type="ordered locus">Sfri_2676</name>
</gene>
<organism>
    <name type="scientific">Shewanella frigidimarina (strain NCIMB 400)</name>
    <dbReference type="NCBI Taxonomy" id="318167"/>
    <lineage>
        <taxon>Bacteria</taxon>
        <taxon>Pseudomonadati</taxon>
        <taxon>Pseudomonadota</taxon>
        <taxon>Gammaproteobacteria</taxon>
        <taxon>Alteromonadales</taxon>
        <taxon>Shewanellaceae</taxon>
        <taxon>Shewanella</taxon>
    </lineage>
</organism>
<reference key="1">
    <citation type="submission" date="2006-08" db="EMBL/GenBank/DDBJ databases">
        <title>Complete sequence of Shewanella frigidimarina NCIMB 400.</title>
        <authorList>
            <consortium name="US DOE Joint Genome Institute"/>
            <person name="Copeland A."/>
            <person name="Lucas S."/>
            <person name="Lapidus A."/>
            <person name="Barry K."/>
            <person name="Detter J.C."/>
            <person name="Glavina del Rio T."/>
            <person name="Hammon N."/>
            <person name="Israni S."/>
            <person name="Dalin E."/>
            <person name="Tice H."/>
            <person name="Pitluck S."/>
            <person name="Fredrickson J.K."/>
            <person name="Kolker E."/>
            <person name="McCuel L.A."/>
            <person name="DiChristina T."/>
            <person name="Nealson K.H."/>
            <person name="Newman D."/>
            <person name="Tiedje J.M."/>
            <person name="Zhou J."/>
            <person name="Romine M.F."/>
            <person name="Culley D.E."/>
            <person name="Serres M."/>
            <person name="Chertkov O."/>
            <person name="Brettin T."/>
            <person name="Bruce D."/>
            <person name="Han C."/>
            <person name="Tapia R."/>
            <person name="Gilna P."/>
            <person name="Schmutz J."/>
            <person name="Larimer F."/>
            <person name="Land M."/>
            <person name="Hauser L."/>
            <person name="Kyrpides N."/>
            <person name="Mikhailova N."/>
            <person name="Richardson P."/>
        </authorList>
    </citation>
    <scope>NUCLEOTIDE SEQUENCE [LARGE SCALE GENOMIC DNA]</scope>
    <source>
        <strain>NCIMB 400</strain>
    </source>
</reference>
<feature type="chain" id="PRO_0000273984" description="Fatty acid oxidation complex subunit alpha">
    <location>
        <begin position="1"/>
        <end position="710"/>
    </location>
</feature>
<feature type="region of interest" description="Enoyl-CoA hydratase" evidence="1">
    <location>
        <begin position="1"/>
        <end position="190"/>
    </location>
</feature>
<feature type="region of interest" description="3-hydroxyacyl-CoA dehydrogenase" evidence="1">
    <location>
        <begin position="310"/>
        <end position="710"/>
    </location>
</feature>
<feature type="site" description="Important for catalytic activity" evidence="1">
    <location>
        <position position="118"/>
    </location>
</feature>
<feature type="site" description="Important for catalytic activity" evidence="1">
    <location>
        <position position="140"/>
    </location>
</feature>
<name>FADJ_SHEFN</name>
<evidence type="ECO:0000255" key="1">
    <source>
        <dbReference type="HAMAP-Rule" id="MF_01617"/>
    </source>
</evidence>
<proteinExistence type="inferred from homology"/>
<comment type="function">
    <text evidence="1">Catalyzes the formation of a hydroxyacyl-CoA by addition of water on enoyl-CoA. Also exhibits 3-hydroxyacyl-CoA epimerase and 3-hydroxyacyl-CoA dehydrogenase activities.</text>
</comment>
<comment type="catalytic activity">
    <reaction evidence="1">
        <text>a (3S)-3-hydroxyacyl-CoA = a (2E)-enoyl-CoA + H2O</text>
        <dbReference type="Rhea" id="RHEA:16105"/>
        <dbReference type="ChEBI" id="CHEBI:15377"/>
        <dbReference type="ChEBI" id="CHEBI:57318"/>
        <dbReference type="ChEBI" id="CHEBI:58856"/>
        <dbReference type="EC" id="4.2.1.17"/>
    </reaction>
</comment>
<comment type="catalytic activity">
    <reaction evidence="1">
        <text>a 4-saturated-(3S)-3-hydroxyacyl-CoA = a (3E)-enoyl-CoA + H2O</text>
        <dbReference type="Rhea" id="RHEA:20724"/>
        <dbReference type="ChEBI" id="CHEBI:15377"/>
        <dbReference type="ChEBI" id="CHEBI:58521"/>
        <dbReference type="ChEBI" id="CHEBI:137480"/>
        <dbReference type="EC" id="4.2.1.17"/>
    </reaction>
</comment>
<comment type="catalytic activity">
    <reaction evidence="1">
        <text>a (3S)-3-hydroxyacyl-CoA + NAD(+) = a 3-oxoacyl-CoA + NADH + H(+)</text>
        <dbReference type="Rhea" id="RHEA:22432"/>
        <dbReference type="ChEBI" id="CHEBI:15378"/>
        <dbReference type="ChEBI" id="CHEBI:57318"/>
        <dbReference type="ChEBI" id="CHEBI:57540"/>
        <dbReference type="ChEBI" id="CHEBI:57945"/>
        <dbReference type="ChEBI" id="CHEBI:90726"/>
        <dbReference type="EC" id="1.1.1.35"/>
    </reaction>
</comment>
<comment type="catalytic activity">
    <reaction evidence="1">
        <text>(3S)-3-hydroxybutanoyl-CoA = (3R)-3-hydroxybutanoyl-CoA</text>
        <dbReference type="Rhea" id="RHEA:21760"/>
        <dbReference type="ChEBI" id="CHEBI:57315"/>
        <dbReference type="ChEBI" id="CHEBI:57316"/>
        <dbReference type="EC" id="5.1.2.3"/>
    </reaction>
</comment>
<comment type="pathway">
    <text evidence="1">Lipid metabolism; fatty acid beta-oxidation.</text>
</comment>
<comment type="subunit">
    <text evidence="1">Heterotetramer of two alpha chains (FadJ) and two beta chains (FadI).</text>
</comment>
<comment type="subcellular location">
    <subcellularLocation>
        <location evidence="1">Cytoplasm</location>
    </subcellularLocation>
</comment>
<comment type="similarity">
    <text evidence="1">In the N-terminal section; belongs to the enoyl-CoA hydratase/isomerase family.</text>
</comment>
<comment type="similarity">
    <text evidence="1">In the central section; belongs to the 3-hydroxyacyl-CoA dehydrogenase family.</text>
</comment>
<protein>
    <recommendedName>
        <fullName evidence="1">Fatty acid oxidation complex subunit alpha</fullName>
    </recommendedName>
    <domain>
        <recommendedName>
            <fullName evidence="1">Enoyl-CoA hydratase/3-hydroxybutyryl-CoA epimerase</fullName>
            <ecNumber evidence="1">4.2.1.17</ecNumber>
            <ecNumber evidence="1">5.1.2.3</ecNumber>
        </recommendedName>
    </domain>
    <domain>
        <recommendedName>
            <fullName evidence="1">3-hydroxyacyl-CoA dehydrogenase</fullName>
            <ecNumber evidence="1">1.1.1.35</ecNumber>
        </recommendedName>
    </domain>
</protein>
<sequence length="710" mass="76491">MSMEKTFNLARRDDGIAILTMDVPGETMNTLKEQFGPEISEILTEIKADSSIKGLVVISGKADSFVAGADITMLAACKNEEQAKTLSQQGHVVFAELEGLSIPVVAAINGACLGGGLELALACHLRVCSDDKKTMLGVPEVQLGLLPGGGGTQRLPRLVGITTALDMMLTGKQIRPKQALKMGLVNDVVPNSILLETAVELAKKGKQAAKPVVQSKINQFLESTSFTRDIIFDQARKQVLKKTQGNYPAPAKIIDCVRQGMNKGMVKGLEVEATHFANLVMSKESAALRSLFFATTEMKKETGAEGAVPRKVKKVMVLGGGLMGGGIASVTTTKAKIPARVKDISEQGLSNALSYAYKLLDKGVKRRHMTPIARDNIMALMTTTTEYTGIKDADIVVEAVFEDLALKHKMVQDVERECGENTIFASNTSSLPIGQIAAAASRPENVIGLHYFSPVEKMPLVEVIAHKTTSPETIATTVAFARKQGKTPIVVQDGAGFYVNRILALYMNEAAQLLLEGQRIEHLDRALVKFGFPVGPMTLLDEVGIDVGAKISPILEKELGDRFKAPAAFDKLLADDRKGRKNGKGFYQYGPKAKKAKLVDESVYKVLDILIASDKEAKGVAERCTIQMLNEAVRCLEEGIIASARDGDIGAIFGIGFPPFLGGPFRYIDTLGASNLVATLQGYQSLYGDRFAPCDTLVKMASDGSQFYKK</sequence>
<accession>Q07ZP8</accession>